<sequence length="314" mass="33715">MSKMTPQEMAAKIGSGLLSFPVTPFKADYSFDETTYRSNMDWLCGYDVAGLFAAGGTGEFFSLTAAEVPEVVKVAVDETKGRVPVLAGTGYGTAIAREIAMSAEKAGADGLLLLPPYLMHAEQEGLAAHVEAVCKSVKIGVIVYNRDNAILQPDTLARLCERCPNLVGYKDGIGDIELMTRVYTKMGDRLTYIGGLPTAETFALPYLDMGVTTYSSAVFNFVPEFATNFYAAVRKRDHATIHAGLKDFILPLIAIRNRKKGYAVSIIKAGMKVIGRDSGPVRLPLTDLTEAEMAELTALVKALPVAASAQQAAE</sequence>
<feature type="chain" id="PRO_1000045401" description="Probable 5-dehydro-4-deoxyglucarate dehydratase">
    <location>
        <begin position="1"/>
        <end position="314"/>
    </location>
</feature>
<keyword id="KW-0456">Lyase</keyword>
<keyword id="KW-1185">Reference proteome</keyword>
<accession>A4YNH1</accession>
<organism>
    <name type="scientific">Bradyrhizobium sp. (strain ORS 278)</name>
    <dbReference type="NCBI Taxonomy" id="114615"/>
    <lineage>
        <taxon>Bacteria</taxon>
        <taxon>Pseudomonadati</taxon>
        <taxon>Pseudomonadota</taxon>
        <taxon>Alphaproteobacteria</taxon>
        <taxon>Hyphomicrobiales</taxon>
        <taxon>Nitrobacteraceae</taxon>
        <taxon>Bradyrhizobium</taxon>
    </lineage>
</organism>
<comment type="catalytic activity">
    <reaction evidence="1">
        <text>5-dehydro-4-deoxy-D-glucarate + H(+) = 2,5-dioxopentanoate + CO2 + H2O</text>
        <dbReference type="Rhea" id="RHEA:24608"/>
        <dbReference type="ChEBI" id="CHEBI:15377"/>
        <dbReference type="ChEBI" id="CHEBI:15378"/>
        <dbReference type="ChEBI" id="CHEBI:16526"/>
        <dbReference type="ChEBI" id="CHEBI:42819"/>
        <dbReference type="ChEBI" id="CHEBI:58136"/>
        <dbReference type="EC" id="4.2.1.41"/>
    </reaction>
</comment>
<comment type="pathway">
    <text evidence="1">Carbohydrate acid metabolism; D-glucarate degradation; 2,5-dioxopentanoate from D-glucarate: step 2/2.</text>
</comment>
<comment type="similarity">
    <text evidence="1">Belongs to the DapA family.</text>
</comment>
<reference key="1">
    <citation type="journal article" date="2007" name="Science">
        <title>Legumes symbioses: absence of nod genes in photosynthetic bradyrhizobia.</title>
        <authorList>
            <person name="Giraud E."/>
            <person name="Moulin L."/>
            <person name="Vallenet D."/>
            <person name="Barbe V."/>
            <person name="Cytryn E."/>
            <person name="Avarre J.-C."/>
            <person name="Jaubert M."/>
            <person name="Simon D."/>
            <person name="Cartieaux F."/>
            <person name="Prin Y."/>
            <person name="Bena G."/>
            <person name="Hannibal L."/>
            <person name="Fardoux J."/>
            <person name="Kojadinovic M."/>
            <person name="Vuillet L."/>
            <person name="Lajus A."/>
            <person name="Cruveiller S."/>
            <person name="Rouy Z."/>
            <person name="Mangenot S."/>
            <person name="Segurens B."/>
            <person name="Dossat C."/>
            <person name="Franck W.L."/>
            <person name="Chang W.-S."/>
            <person name="Saunders E."/>
            <person name="Bruce D."/>
            <person name="Richardson P."/>
            <person name="Normand P."/>
            <person name="Dreyfus B."/>
            <person name="Pignol D."/>
            <person name="Stacey G."/>
            <person name="Emerich D."/>
            <person name="Vermeglio A."/>
            <person name="Medigue C."/>
            <person name="Sadowsky M."/>
        </authorList>
    </citation>
    <scope>NUCLEOTIDE SEQUENCE [LARGE SCALE GENOMIC DNA]</scope>
    <source>
        <strain>ORS 278</strain>
    </source>
</reference>
<gene>
    <name type="ordered locus">BRADO1565</name>
</gene>
<name>KDGD_BRASO</name>
<evidence type="ECO:0000255" key="1">
    <source>
        <dbReference type="HAMAP-Rule" id="MF_00694"/>
    </source>
</evidence>
<dbReference type="EC" id="4.2.1.41" evidence="1"/>
<dbReference type="EMBL" id="CU234118">
    <property type="protein sequence ID" value="CAL75447.1"/>
    <property type="molecule type" value="Genomic_DNA"/>
</dbReference>
<dbReference type="RefSeq" id="WP_011924678.1">
    <property type="nucleotide sequence ID" value="NC_009445.1"/>
</dbReference>
<dbReference type="SMR" id="A4YNH1"/>
<dbReference type="STRING" id="114615.BRADO1565"/>
<dbReference type="KEGG" id="bra:BRADO1565"/>
<dbReference type="eggNOG" id="COG0329">
    <property type="taxonomic scope" value="Bacteria"/>
</dbReference>
<dbReference type="HOGENOM" id="CLU_049343_5_2_5"/>
<dbReference type="OrthoDB" id="8995637at2"/>
<dbReference type="UniPathway" id="UPA00564">
    <property type="reaction ID" value="UER00628"/>
</dbReference>
<dbReference type="Proteomes" id="UP000001994">
    <property type="component" value="Chromosome"/>
</dbReference>
<dbReference type="GO" id="GO:0008840">
    <property type="term" value="F:4-hydroxy-tetrahydrodipicolinate synthase activity"/>
    <property type="evidence" value="ECO:0007669"/>
    <property type="project" value="TreeGrafter"/>
</dbReference>
<dbReference type="GO" id="GO:0047448">
    <property type="term" value="F:5-dehydro-4-deoxyglucarate dehydratase activity"/>
    <property type="evidence" value="ECO:0007669"/>
    <property type="project" value="UniProtKB-UniRule"/>
</dbReference>
<dbReference type="GO" id="GO:0042838">
    <property type="term" value="P:D-glucarate catabolic process"/>
    <property type="evidence" value="ECO:0007669"/>
    <property type="project" value="UniProtKB-UniRule"/>
</dbReference>
<dbReference type="CDD" id="cd00951">
    <property type="entry name" value="KDGDH"/>
    <property type="match status" value="1"/>
</dbReference>
<dbReference type="Gene3D" id="3.20.20.70">
    <property type="entry name" value="Aldolase class I"/>
    <property type="match status" value="1"/>
</dbReference>
<dbReference type="HAMAP" id="MF_00694">
    <property type="entry name" value="KDGDH"/>
    <property type="match status" value="1"/>
</dbReference>
<dbReference type="InterPro" id="IPR013785">
    <property type="entry name" value="Aldolase_TIM"/>
</dbReference>
<dbReference type="InterPro" id="IPR002220">
    <property type="entry name" value="DapA-like"/>
</dbReference>
<dbReference type="InterPro" id="IPR017655">
    <property type="entry name" value="Dehydro-deoxyglucarate_dehyd"/>
</dbReference>
<dbReference type="NCBIfam" id="TIGR03249">
    <property type="entry name" value="KdgD"/>
    <property type="match status" value="1"/>
</dbReference>
<dbReference type="NCBIfam" id="NF002958">
    <property type="entry name" value="PRK03620.1"/>
    <property type="match status" value="1"/>
</dbReference>
<dbReference type="PANTHER" id="PTHR12128:SF19">
    <property type="entry name" value="5-DEHYDRO-4-DEOXYGLUCARATE DEHYDRATASE 2-RELATED"/>
    <property type="match status" value="1"/>
</dbReference>
<dbReference type="PANTHER" id="PTHR12128">
    <property type="entry name" value="DIHYDRODIPICOLINATE SYNTHASE"/>
    <property type="match status" value="1"/>
</dbReference>
<dbReference type="Pfam" id="PF00701">
    <property type="entry name" value="DHDPS"/>
    <property type="match status" value="1"/>
</dbReference>
<dbReference type="PIRSF" id="PIRSF001365">
    <property type="entry name" value="DHDPS"/>
    <property type="match status" value="1"/>
</dbReference>
<dbReference type="SMART" id="SM01130">
    <property type="entry name" value="DHDPS"/>
    <property type="match status" value="1"/>
</dbReference>
<dbReference type="SUPFAM" id="SSF51569">
    <property type="entry name" value="Aldolase"/>
    <property type="match status" value="1"/>
</dbReference>
<proteinExistence type="inferred from homology"/>
<protein>
    <recommendedName>
        <fullName evidence="1">Probable 5-dehydro-4-deoxyglucarate dehydratase</fullName>
        <ecNumber evidence="1">4.2.1.41</ecNumber>
    </recommendedName>
    <alternativeName>
        <fullName evidence="1">5-keto-4-deoxy-glucarate dehydratase</fullName>
        <shortName evidence="1">KDGDH</shortName>
    </alternativeName>
</protein>